<protein>
    <recommendedName>
        <fullName evidence="1">ATP synthase epsilon chain</fullName>
    </recommendedName>
    <alternativeName>
        <fullName evidence="1">ATP synthase F1 sector epsilon subunit</fullName>
    </alternativeName>
    <alternativeName>
        <fullName evidence="1">F-ATPase epsilon subunit</fullName>
    </alternativeName>
</protein>
<keyword id="KW-0066">ATP synthesis</keyword>
<keyword id="KW-1003">Cell membrane</keyword>
<keyword id="KW-0139">CF(1)</keyword>
<keyword id="KW-0375">Hydrogen ion transport</keyword>
<keyword id="KW-0406">Ion transport</keyword>
<keyword id="KW-0472">Membrane</keyword>
<keyword id="KW-1185">Reference proteome</keyword>
<keyword id="KW-0813">Transport</keyword>
<dbReference type="EMBL" id="CP000233">
    <property type="protein sequence ID" value="ABD99410.1"/>
    <property type="molecule type" value="Genomic_DNA"/>
</dbReference>
<dbReference type="RefSeq" id="WP_003699947.1">
    <property type="nucleotide sequence ID" value="NC_007929.1"/>
</dbReference>
<dbReference type="RefSeq" id="YP_535493.1">
    <property type="nucleotide sequence ID" value="NC_007929.1"/>
</dbReference>
<dbReference type="SMR" id="Q1WUC5"/>
<dbReference type="STRING" id="362948.LSL_0601"/>
<dbReference type="KEGG" id="lsl:LSL_0601"/>
<dbReference type="PATRIC" id="fig|362948.14.peg.680"/>
<dbReference type="HOGENOM" id="CLU_084338_1_0_9"/>
<dbReference type="OrthoDB" id="9804110at2"/>
<dbReference type="Proteomes" id="UP000006559">
    <property type="component" value="Chromosome"/>
</dbReference>
<dbReference type="GO" id="GO:0005886">
    <property type="term" value="C:plasma membrane"/>
    <property type="evidence" value="ECO:0007669"/>
    <property type="project" value="UniProtKB-SubCell"/>
</dbReference>
<dbReference type="GO" id="GO:0045259">
    <property type="term" value="C:proton-transporting ATP synthase complex"/>
    <property type="evidence" value="ECO:0007669"/>
    <property type="project" value="UniProtKB-KW"/>
</dbReference>
<dbReference type="GO" id="GO:0005524">
    <property type="term" value="F:ATP binding"/>
    <property type="evidence" value="ECO:0007669"/>
    <property type="project" value="UniProtKB-UniRule"/>
</dbReference>
<dbReference type="GO" id="GO:0046933">
    <property type="term" value="F:proton-transporting ATP synthase activity, rotational mechanism"/>
    <property type="evidence" value="ECO:0007669"/>
    <property type="project" value="UniProtKB-UniRule"/>
</dbReference>
<dbReference type="CDD" id="cd12152">
    <property type="entry name" value="F1-ATPase_delta"/>
    <property type="match status" value="1"/>
</dbReference>
<dbReference type="FunFam" id="1.20.5.440:FF:000001">
    <property type="entry name" value="ATP synthase epsilon chain"/>
    <property type="match status" value="1"/>
</dbReference>
<dbReference type="Gene3D" id="1.20.5.440">
    <property type="entry name" value="ATP synthase delta/epsilon subunit, C-terminal domain"/>
    <property type="match status" value="1"/>
</dbReference>
<dbReference type="Gene3D" id="2.60.15.10">
    <property type="entry name" value="F0F1 ATP synthase delta/epsilon subunit, N-terminal"/>
    <property type="match status" value="1"/>
</dbReference>
<dbReference type="HAMAP" id="MF_00530">
    <property type="entry name" value="ATP_synth_epsil_bac"/>
    <property type="match status" value="1"/>
</dbReference>
<dbReference type="InterPro" id="IPR036794">
    <property type="entry name" value="ATP_F1_dsu/esu_C_sf"/>
</dbReference>
<dbReference type="InterPro" id="IPR001469">
    <property type="entry name" value="ATP_synth_F1_dsu/esu"/>
</dbReference>
<dbReference type="InterPro" id="IPR020546">
    <property type="entry name" value="ATP_synth_F1_dsu/esu_N"/>
</dbReference>
<dbReference type="InterPro" id="IPR020547">
    <property type="entry name" value="ATP_synth_F1_esu_C"/>
</dbReference>
<dbReference type="InterPro" id="IPR036771">
    <property type="entry name" value="ATPsynth_dsu/esu_N"/>
</dbReference>
<dbReference type="NCBIfam" id="TIGR01216">
    <property type="entry name" value="ATP_synt_epsi"/>
    <property type="match status" value="1"/>
</dbReference>
<dbReference type="NCBIfam" id="NF001846">
    <property type="entry name" value="PRK00571.1-3"/>
    <property type="match status" value="1"/>
</dbReference>
<dbReference type="PANTHER" id="PTHR13822">
    <property type="entry name" value="ATP SYNTHASE DELTA/EPSILON CHAIN"/>
    <property type="match status" value="1"/>
</dbReference>
<dbReference type="PANTHER" id="PTHR13822:SF10">
    <property type="entry name" value="ATP SYNTHASE EPSILON CHAIN, CHLOROPLASTIC"/>
    <property type="match status" value="1"/>
</dbReference>
<dbReference type="Pfam" id="PF00401">
    <property type="entry name" value="ATP-synt_DE"/>
    <property type="match status" value="1"/>
</dbReference>
<dbReference type="Pfam" id="PF02823">
    <property type="entry name" value="ATP-synt_DE_N"/>
    <property type="match status" value="1"/>
</dbReference>
<dbReference type="SUPFAM" id="SSF46604">
    <property type="entry name" value="Epsilon subunit of F1F0-ATP synthase C-terminal domain"/>
    <property type="match status" value="1"/>
</dbReference>
<dbReference type="SUPFAM" id="SSF51344">
    <property type="entry name" value="Epsilon subunit of F1F0-ATP synthase N-terminal domain"/>
    <property type="match status" value="1"/>
</dbReference>
<accession>Q1WUC5</accession>
<name>ATPE_LIGS1</name>
<proteinExistence type="inferred from homology"/>
<organism>
    <name type="scientific">Ligilactobacillus salivarius (strain UCC118)</name>
    <name type="common">Lactobacillus salivarius</name>
    <dbReference type="NCBI Taxonomy" id="362948"/>
    <lineage>
        <taxon>Bacteria</taxon>
        <taxon>Bacillati</taxon>
        <taxon>Bacillota</taxon>
        <taxon>Bacilli</taxon>
        <taxon>Lactobacillales</taxon>
        <taxon>Lactobacillaceae</taxon>
        <taxon>Ligilactobacillus</taxon>
    </lineage>
</organism>
<feature type="chain" id="PRO_0000265830" description="ATP synthase epsilon chain">
    <location>
        <begin position="1"/>
        <end position="139"/>
    </location>
</feature>
<reference key="1">
    <citation type="journal article" date="2006" name="Proc. Natl. Acad. Sci. U.S.A.">
        <title>Multireplicon genome architecture of Lactobacillus salivarius.</title>
        <authorList>
            <person name="Claesson M.J."/>
            <person name="Li Y."/>
            <person name="Leahy S."/>
            <person name="Canchaya C."/>
            <person name="van Pijkeren J.P."/>
            <person name="Cerdeno-Tarraga A.M."/>
            <person name="Parkhill J."/>
            <person name="Flynn S."/>
            <person name="O'Sullivan G.C."/>
            <person name="Collins J.K."/>
            <person name="Higgins D."/>
            <person name="Shanahan F."/>
            <person name="Fitzgerald G.F."/>
            <person name="van Sinderen D."/>
            <person name="O'Toole P.W."/>
        </authorList>
    </citation>
    <scope>NUCLEOTIDE SEQUENCE [LARGE SCALE GENOMIC DNA]</scope>
    <source>
        <strain>UCC118</strain>
    </source>
</reference>
<comment type="function">
    <text evidence="1">Produces ATP from ADP in the presence of a proton gradient across the membrane.</text>
</comment>
<comment type="subunit">
    <text>F-type ATPases have 2 components, CF(1) - the catalytic core - and CF(0) - the membrane proton channel. CF(1) has five subunits: alpha(3), beta(3), gamma(1), delta(1), epsilon(1). CF(0) has three main subunits: a, b and c.</text>
</comment>
<comment type="subcellular location">
    <subcellularLocation>
        <location evidence="1">Cell membrane</location>
        <topology evidence="1">Peripheral membrane protein</topology>
    </subcellularLocation>
</comment>
<comment type="similarity">
    <text evidence="1">Belongs to the ATPase epsilon chain family.</text>
</comment>
<evidence type="ECO:0000255" key="1">
    <source>
        <dbReference type="HAMAP-Rule" id="MF_00530"/>
    </source>
</evidence>
<gene>
    <name evidence="1" type="primary">atpC</name>
    <name type="ordered locus">LSL_0601</name>
</gene>
<sequence length="139" mass="15464">MDEKSILTINVVTPDGSVYENTTDLVICKTTVGEIGIMPNHLPLLASLAIDEVRVKVDDENFDEIAVSGGFVEFSDNTLSVVASAAERKETIDVSRAERAKQRAEKRIEEAKNENNDIDLRRAEVSLRRAINRLNISKH</sequence>